<sequence length="206" mass="21781">MIVTIDGVAASGKSSVSSGVARALGIPYVSSGLLYRAATLLGLEAALDLSDAPRLLAHLRALPLRLEPLAEGNRVWSGERDLTPGLHQSAVDAGVSTVAAHPELRAWVDEQLRQLPPPFVAEGRDMGTNVFPDAPAKFYLTASPRIRAERRSAERPEDVDAIEAALIARDRKDAAQSAPAPDARVIDTGPLGLEEVIGEILGEIGQ</sequence>
<protein>
    <recommendedName>
        <fullName evidence="1">Cytidylate kinase</fullName>
        <shortName evidence="1">CK</shortName>
        <ecNumber evidence="1">2.7.4.25</ecNumber>
    </recommendedName>
    <alternativeName>
        <fullName evidence="1">Cytidine monophosphate kinase</fullName>
        <shortName evidence="1">CMP kinase</shortName>
    </alternativeName>
</protein>
<accession>Q9RRE9</accession>
<name>KCY_DEIRA</name>
<dbReference type="EC" id="2.7.4.25" evidence="1"/>
<dbReference type="EMBL" id="AE000513">
    <property type="protein sequence ID" value="AAF12083.1"/>
    <property type="status" value="ALT_INIT"/>
    <property type="molecule type" value="Genomic_DNA"/>
</dbReference>
<dbReference type="PIR" id="G75261">
    <property type="entry name" value="G75261"/>
</dbReference>
<dbReference type="RefSeq" id="NP_296263.1">
    <property type="nucleotide sequence ID" value="NC_001263.1"/>
</dbReference>
<dbReference type="RefSeq" id="WP_027480105.1">
    <property type="nucleotide sequence ID" value="NC_001263.1"/>
</dbReference>
<dbReference type="SMR" id="Q9RRE9"/>
<dbReference type="FunCoup" id="Q9RRE9">
    <property type="interactions" value="249"/>
</dbReference>
<dbReference type="STRING" id="243230.DR_2543"/>
<dbReference type="PaxDb" id="243230-DR_2543"/>
<dbReference type="EnsemblBacteria" id="AAF12083">
    <property type="protein sequence ID" value="AAF12083"/>
    <property type="gene ID" value="DR_2543"/>
</dbReference>
<dbReference type="GeneID" id="69518795"/>
<dbReference type="KEGG" id="dra:DR_2543"/>
<dbReference type="PATRIC" id="fig|243230.17.peg.2786"/>
<dbReference type="eggNOG" id="COG0283">
    <property type="taxonomic scope" value="Bacteria"/>
</dbReference>
<dbReference type="HOGENOM" id="CLU_079959_0_0_0"/>
<dbReference type="InParanoid" id="Q9RRE9"/>
<dbReference type="OrthoDB" id="9807434at2"/>
<dbReference type="Proteomes" id="UP000002524">
    <property type="component" value="Chromosome 1"/>
</dbReference>
<dbReference type="GO" id="GO:0005829">
    <property type="term" value="C:cytosol"/>
    <property type="evidence" value="ECO:0000318"/>
    <property type="project" value="GO_Central"/>
</dbReference>
<dbReference type="GO" id="GO:0004127">
    <property type="term" value="F:(d)CMP kinase activity"/>
    <property type="evidence" value="ECO:0000318"/>
    <property type="project" value="GO_Central"/>
</dbReference>
<dbReference type="GO" id="GO:0005524">
    <property type="term" value="F:ATP binding"/>
    <property type="evidence" value="ECO:0007669"/>
    <property type="project" value="UniProtKB-UniRule"/>
</dbReference>
<dbReference type="GO" id="GO:0036430">
    <property type="term" value="F:CMP kinase activity"/>
    <property type="evidence" value="ECO:0007669"/>
    <property type="project" value="RHEA"/>
</dbReference>
<dbReference type="GO" id="GO:0036431">
    <property type="term" value="F:dCMP kinase activity"/>
    <property type="evidence" value="ECO:0007669"/>
    <property type="project" value="RHEA"/>
</dbReference>
<dbReference type="GO" id="GO:0015949">
    <property type="term" value="P:nucleobase-containing small molecule interconversion"/>
    <property type="evidence" value="ECO:0000318"/>
    <property type="project" value="GO_Central"/>
</dbReference>
<dbReference type="GO" id="GO:0006220">
    <property type="term" value="P:pyrimidine nucleotide metabolic process"/>
    <property type="evidence" value="ECO:0007669"/>
    <property type="project" value="UniProtKB-UniRule"/>
</dbReference>
<dbReference type="CDD" id="cd02020">
    <property type="entry name" value="CMPK"/>
    <property type="match status" value="1"/>
</dbReference>
<dbReference type="FunFam" id="3.40.50.300:FF:003002">
    <property type="entry name" value="Cytidylate kinase"/>
    <property type="match status" value="1"/>
</dbReference>
<dbReference type="Gene3D" id="3.40.50.300">
    <property type="entry name" value="P-loop containing nucleotide triphosphate hydrolases"/>
    <property type="match status" value="1"/>
</dbReference>
<dbReference type="HAMAP" id="MF_00238">
    <property type="entry name" value="Cytidyl_kinase_type1"/>
    <property type="match status" value="1"/>
</dbReference>
<dbReference type="InterPro" id="IPR003136">
    <property type="entry name" value="Cytidylate_kin"/>
</dbReference>
<dbReference type="InterPro" id="IPR011994">
    <property type="entry name" value="Cytidylate_kinase_dom"/>
</dbReference>
<dbReference type="InterPro" id="IPR027417">
    <property type="entry name" value="P-loop_NTPase"/>
</dbReference>
<dbReference type="NCBIfam" id="TIGR00017">
    <property type="entry name" value="cmk"/>
    <property type="match status" value="1"/>
</dbReference>
<dbReference type="Pfam" id="PF02224">
    <property type="entry name" value="Cytidylate_kin"/>
    <property type="match status" value="1"/>
</dbReference>
<dbReference type="SUPFAM" id="SSF52540">
    <property type="entry name" value="P-loop containing nucleoside triphosphate hydrolases"/>
    <property type="match status" value="1"/>
</dbReference>
<gene>
    <name evidence="1" type="primary">cmk</name>
    <name type="ordered locus">DR_2543</name>
</gene>
<keyword id="KW-0067">ATP-binding</keyword>
<keyword id="KW-0963">Cytoplasm</keyword>
<keyword id="KW-0418">Kinase</keyword>
<keyword id="KW-0547">Nucleotide-binding</keyword>
<keyword id="KW-1185">Reference proteome</keyword>
<keyword id="KW-0808">Transferase</keyword>
<feature type="chain" id="PRO_0000131911" description="Cytidylate kinase">
    <location>
        <begin position="1"/>
        <end position="206"/>
    </location>
</feature>
<feature type="binding site" evidence="1">
    <location>
        <begin position="7"/>
        <end position="15"/>
    </location>
    <ligand>
        <name>ATP</name>
        <dbReference type="ChEBI" id="CHEBI:30616"/>
    </ligand>
</feature>
<reference key="1">
    <citation type="journal article" date="1999" name="Science">
        <title>Genome sequence of the radioresistant bacterium Deinococcus radiodurans R1.</title>
        <authorList>
            <person name="White O."/>
            <person name="Eisen J.A."/>
            <person name="Heidelberg J.F."/>
            <person name="Hickey E.K."/>
            <person name="Peterson J.D."/>
            <person name="Dodson R.J."/>
            <person name="Haft D.H."/>
            <person name="Gwinn M.L."/>
            <person name="Nelson W.C."/>
            <person name="Richardson D.L."/>
            <person name="Moffat K.S."/>
            <person name="Qin H."/>
            <person name="Jiang L."/>
            <person name="Pamphile W."/>
            <person name="Crosby M."/>
            <person name="Shen M."/>
            <person name="Vamathevan J.J."/>
            <person name="Lam P."/>
            <person name="McDonald L.A."/>
            <person name="Utterback T.R."/>
            <person name="Zalewski C."/>
            <person name="Makarova K.S."/>
            <person name="Aravind L."/>
            <person name="Daly M.J."/>
            <person name="Minton K.W."/>
            <person name="Fleischmann R.D."/>
            <person name="Ketchum K.A."/>
            <person name="Nelson K.E."/>
            <person name="Salzberg S.L."/>
            <person name="Smith H.O."/>
            <person name="Venter J.C."/>
            <person name="Fraser C.M."/>
        </authorList>
    </citation>
    <scope>NUCLEOTIDE SEQUENCE [LARGE SCALE GENOMIC DNA]</scope>
    <source>
        <strain>ATCC 13939 / DSM 20539 / JCM 16871 / CCUG 27074 / LMG 4051 / NBRC 15346 / NCIMB 9279 / VKM B-1422 / R1</strain>
    </source>
</reference>
<proteinExistence type="inferred from homology"/>
<organism>
    <name type="scientific">Deinococcus radiodurans (strain ATCC 13939 / DSM 20539 / JCM 16871 / CCUG 27074 / LMG 4051 / NBRC 15346 / NCIMB 9279 / VKM B-1422 / R1)</name>
    <dbReference type="NCBI Taxonomy" id="243230"/>
    <lineage>
        <taxon>Bacteria</taxon>
        <taxon>Thermotogati</taxon>
        <taxon>Deinococcota</taxon>
        <taxon>Deinococci</taxon>
        <taxon>Deinococcales</taxon>
        <taxon>Deinococcaceae</taxon>
        <taxon>Deinococcus</taxon>
    </lineage>
</organism>
<comment type="catalytic activity">
    <reaction evidence="1">
        <text>CMP + ATP = CDP + ADP</text>
        <dbReference type="Rhea" id="RHEA:11600"/>
        <dbReference type="ChEBI" id="CHEBI:30616"/>
        <dbReference type="ChEBI" id="CHEBI:58069"/>
        <dbReference type="ChEBI" id="CHEBI:60377"/>
        <dbReference type="ChEBI" id="CHEBI:456216"/>
        <dbReference type="EC" id="2.7.4.25"/>
    </reaction>
</comment>
<comment type="catalytic activity">
    <reaction evidence="1">
        <text>dCMP + ATP = dCDP + ADP</text>
        <dbReference type="Rhea" id="RHEA:25094"/>
        <dbReference type="ChEBI" id="CHEBI:30616"/>
        <dbReference type="ChEBI" id="CHEBI:57566"/>
        <dbReference type="ChEBI" id="CHEBI:58593"/>
        <dbReference type="ChEBI" id="CHEBI:456216"/>
        <dbReference type="EC" id="2.7.4.25"/>
    </reaction>
</comment>
<comment type="subcellular location">
    <subcellularLocation>
        <location evidence="1">Cytoplasm</location>
    </subcellularLocation>
</comment>
<comment type="similarity">
    <text evidence="1">Belongs to the cytidylate kinase family. Type 1 subfamily.</text>
</comment>
<comment type="sequence caution" evidence="2">
    <conflict type="erroneous initiation">
        <sequence resource="EMBL-CDS" id="AAF12083"/>
    </conflict>
</comment>
<evidence type="ECO:0000255" key="1">
    <source>
        <dbReference type="HAMAP-Rule" id="MF_00238"/>
    </source>
</evidence>
<evidence type="ECO:0000305" key="2"/>